<feature type="chain" id="PRO_1000114469" description="Small ribosomal subunit protein bS18">
    <location>
        <begin position="1"/>
        <end position="76"/>
    </location>
</feature>
<organism>
    <name type="scientific">Xylella fastidiosa (strain M12)</name>
    <dbReference type="NCBI Taxonomy" id="405440"/>
    <lineage>
        <taxon>Bacteria</taxon>
        <taxon>Pseudomonadati</taxon>
        <taxon>Pseudomonadota</taxon>
        <taxon>Gammaproteobacteria</taxon>
        <taxon>Lysobacterales</taxon>
        <taxon>Lysobacteraceae</taxon>
        <taxon>Xylella</taxon>
    </lineage>
</organism>
<name>RS18_XYLFM</name>
<proteinExistence type="inferred from homology"/>
<gene>
    <name evidence="1" type="primary">rpsR</name>
    <name type="ordered locus">Xfasm12_2132</name>
</gene>
<sequence length="76" mass="9002">MSKFFRRRKFCKFTAEGIKEIDYKDLNTLRQYLTENGRIVPSRVTGTKSKYQRQLTTAVKLARFLALIPYTDNHDI</sequence>
<accession>B0U5H1</accession>
<dbReference type="EMBL" id="CP000941">
    <property type="protein sequence ID" value="ACA12989.1"/>
    <property type="molecule type" value="Genomic_DNA"/>
</dbReference>
<dbReference type="RefSeq" id="WP_004084635.1">
    <property type="nucleotide sequence ID" value="NC_010513.1"/>
</dbReference>
<dbReference type="SMR" id="B0U5H1"/>
<dbReference type="GeneID" id="93905805"/>
<dbReference type="KEGG" id="xfm:Xfasm12_2132"/>
<dbReference type="HOGENOM" id="CLU_148710_2_2_6"/>
<dbReference type="GO" id="GO:0022627">
    <property type="term" value="C:cytosolic small ribosomal subunit"/>
    <property type="evidence" value="ECO:0007669"/>
    <property type="project" value="TreeGrafter"/>
</dbReference>
<dbReference type="GO" id="GO:0070181">
    <property type="term" value="F:small ribosomal subunit rRNA binding"/>
    <property type="evidence" value="ECO:0007669"/>
    <property type="project" value="TreeGrafter"/>
</dbReference>
<dbReference type="GO" id="GO:0003735">
    <property type="term" value="F:structural constituent of ribosome"/>
    <property type="evidence" value="ECO:0007669"/>
    <property type="project" value="InterPro"/>
</dbReference>
<dbReference type="GO" id="GO:0006412">
    <property type="term" value="P:translation"/>
    <property type="evidence" value="ECO:0007669"/>
    <property type="project" value="UniProtKB-UniRule"/>
</dbReference>
<dbReference type="FunFam" id="4.10.640.10:FF:000001">
    <property type="entry name" value="30S ribosomal protein S18"/>
    <property type="match status" value="1"/>
</dbReference>
<dbReference type="Gene3D" id="4.10.640.10">
    <property type="entry name" value="Ribosomal protein S18"/>
    <property type="match status" value="1"/>
</dbReference>
<dbReference type="HAMAP" id="MF_00270">
    <property type="entry name" value="Ribosomal_bS18"/>
    <property type="match status" value="1"/>
</dbReference>
<dbReference type="InterPro" id="IPR001648">
    <property type="entry name" value="Ribosomal_bS18"/>
</dbReference>
<dbReference type="InterPro" id="IPR018275">
    <property type="entry name" value="Ribosomal_bS18_CS"/>
</dbReference>
<dbReference type="InterPro" id="IPR036870">
    <property type="entry name" value="Ribosomal_bS18_sf"/>
</dbReference>
<dbReference type="NCBIfam" id="TIGR00165">
    <property type="entry name" value="S18"/>
    <property type="match status" value="1"/>
</dbReference>
<dbReference type="PANTHER" id="PTHR13479">
    <property type="entry name" value="30S RIBOSOMAL PROTEIN S18"/>
    <property type="match status" value="1"/>
</dbReference>
<dbReference type="PANTHER" id="PTHR13479:SF40">
    <property type="entry name" value="SMALL RIBOSOMAL SUBUNIT PROTEIN BS18M"/>
    <property type="match status" value="1"/>
</dbReference>
<dbReference type="Pfam" id="PF01084">
    <property type="entry name" value="Ribosomal_S18"/>
    <property type="match status" value="1"/>
</dbReference>
<dbReference type="PRINTS" id="PR00974">
    <property type="entry name" value="RIBOSOMALS18"/>
</dbReference>
<dbReference type="SUPFAM" id="SSF46911">
    <property type="entry name" value="Ribosomal protein S18"/>
    <property type="match status" value="1"/>
</dbReference>
<dbReference type="PROSITE" id="PS00057">
    <property type="entry name" value="RIBOSOMAL_S18"/>
    <property type="match status" value="1"/>
</dbReference>
<protein>
    <recommendedName>
        <fullName evidence="1">Small ribosomal subunit protein bS18</fullName>
    </recommendedName>
    <alternativeName>
        <fullName evidence="2">30S ribosomal protein S18</fullName>
    </alternativeName>
</protein>
<keyword id="KW-0687">Ribonucleoprotein</keyword>
<keyword id="KW-0689">Ribosomal protein</keyword>
<keyword id="KW-0694">RNA-binding</keyword>
<keyword id="KW-0699">rRNA-binding</keyword>
<comment type="function">
    <text evidence="1">Binds as a heterodimer with protein bS6 to the central domain of the 16S rRNA, where it helps stabilize the platform of the 30S subunit.</text>
</comment>
<comment type="subunit">
    <text evidence="1">Part of the 30S ribosomal subunit. Forms a tight heterodimer with protein bS6.</text>
</comment>
<comment type="similarity">
    <text evidence="1">Belongs to the bacterial ribosomal protein bS18 family.</text>
</comment>
<reference key="1">
    <citation type="journal article" date="2010" name="J. Bacteriol.">
        <title>Whole genome sequences of two Xylella fastidiosa strains (M12 and M23) causing almond leaf scorch disease in California.</title>
        <authorList>
            <person name="Chen J."/>
            <person name="Xie G."/>
            <person name="Han S."/>
            <person name="Chertkov O."/>
            <person name="Sims D."/>
            <person name="Civerolo E.L."/>
        </authorList>
    </citation>
    <scope>NUCLEOTIDE SEQUENCE [LARGE SCALE GENOMIC DNA]</scope>
    <source>
        <strain>M12</strain>
    </source>
</reference>
<evidence type="ECO:0000255" key="1">
    <source>
        <dbReference type="HAMAP-Rule" id="MF_00270"/>
    </source>
</evidence>
<evidence type="ECO:0000305" key="2"/>